<feature type="chain" id="PRO_0000343445" description="Transcription initiation factor TFIID subunit 4">
    <location>
        <begin position="1"/>
        <end position="388"/>
    </location>
</feature>
<feature type="domain" description="Histone-fold">
    <location>
        <begin position="193"/>
        <end position="261"/>
    </location>
</feature>
<feature type="region of interest" description="Disordered" evidence="4">
    <location>
        <begin position="1"/>
        <end position="143"/>
    </location>
</feature>
<feature type="coiled-coil region" evidence="3">
    <location>
        <begin position="279"/>
        <end position="297"/>
    </location>
</feature>
<feature type="compositionally biased region" description="Polar residues" evidence="4">
    <location>
        <begin position="12"/>
        <end position="22"/>
    </location>
</feature>
<feature type="compositionally biased region" description="Polar residues" evidence="4">
    <location>
        <begin position="43"/>
        <end position="64"/>
    </location>
</feature>
<feature type="compositionally biased region" description="Polar residues" evidence="4">
    <location>
        <begin position="79"/>
        <end position="98"/>
    </location>
</feature>
<feature type="compositionally biased region" description="Basic and acidic residues" evidence="4">
    <location>
        <begin position="106"/>
        <end position="126"/>
    </location>
</feature>
<feature type="compositionally biased region" description="Low complexity" evidence="4">
    <location>
        <begin position="127"/>
        <end position="139"/>
    </location>
</feature>
<feature type="modified residue" description="Phosphoserine" evidence="2">
    <location>
        <position position="36"/>
    </location>
</feature>
<feature type="modified residue" description="Phosphoserine" evidence="2">
    <location>
        <position position="49"/>
    </location>
</feature>
<feature type="modified residue" description="Phosphoserine" evidence="2">
    <location>
        <position position="80"/>
    </location>
</feature>
<name>TAF4_YEAS7</name>
<protein>
    <recommendedName>
        <fullName>Transcription initiation factor TFIID subunit 4</fullName>
    </recommendedName>
    <alternativeName>
        <fullName>MPT-1</fullName>
    </alternativeName>
    <alternativeName>
        <fullName>TAF suppressor gene 2 protein</fullName>
    </alternativeName>
    <alternativeName>
        <fullName>TAFII-48</fullName>
    </alternativeName>
    <alternativeName>
        <fullName>TBP-associated factor 4</fullName>
    </alternativeName>
    <alternativeName>
        <fullName>TBP-associated factor 48 kDa</fullName>
    </alternativeName>
</protein>
<organism>
    <name type="scientific">Saccharomyces cerevisiae (strain YJM789)</name>
    <name type="common">Baker's yeast</name>
    <dbReference type="NCBI Taxonomy" id="307796"/>
    <lineage>
        <taxon>Eukaryota</taxon>
        <taxon>Fungi</taxon>
        <taxon>Dikarya</taxon>
        <taxon>Ascomycota</taxon>
        <taxon>Saccharomycotina</taxon>
        <taxon>Saccharomycetes</taxon>
        <taxon>Saccharomycetales</taxon>
        <taxon>Saccharomycetaceae</taxon>
        <taxon>Saccharomyces</taxon>
    </lineage>
</organism>
<proteinExistence type="inferred from homology"/>
<comment type="function">
    <text evidence="1">Functions as a component of the DNA-binding general transcription factor complex TFIID. Binding of TFIID to a promoter (with or without TATA element) is the initial step in pre-initiation complex (PIC) formation. TFIID plays a key role in the regulation of gene expression by RNA polymerase II through different activities such as transcription activator interaction, core promoter recognition and selectivity, TFIIA and TFIIB interaction, chromatin modification (histone acetylation by TAF1), facilitation of DNA opening and initiation of transcription (By similarity).</text>
</comment>
<comment type="subunit">
    <text evidence="1">TAF4 heterodimerizes with TAF12, forming ultimately an octamer consisting of a TAF6/TAF9 heterotetramer core flanked by TAF4/TAF12 dimers on either side, similar to the histone H2A/H2B/H3/H4 octamer. The 1.2 MDa TFIID complex is composed of TATA binding protein (TBP) and the 14 TBP-associated factors. One copy of each TAF1, TAF2, TAF3, TAF7, TAF8, TAF11, TAF13, two copies of each TAF4, TAF5, TAF6, TAF9, TAF10, TAF12, and three copies of TAF14 (By similarity).</text>
</comment>
<comment type="subcellular location">
    <subcellularLocation>
        <location evidence="1">Nucleus</location>
    </subcellularLocation>
</comment>
<comment type="similarity">
    <text evidence="5">Belongs to the TAF4 family.</text>
</comment>
<gene>
    <name type="primary">TAF4</name>
    <name type="synonym">MPT1</name>
    <name type="synonym">TAF48</name>
    <name type="synonym">TSG2</name>
    <name type="ORF">SCY_4179</name>
</gene>
<accession>A6ZM67</accession>
<evidence type="ECO:0000250" key="1"/>
<evidence type="ECO:0000250" key="2">
    <source>
        <dbReference type="UniProtKB" id="P50105"/>
    </source>
</evidence>
<evidence type="ECO:0000255" key="3"/>
<evidence type="ECO:0000256" key="4">
    <source>
        <dbReference type="SAM" id="MobiDB-lite"/>
    </source>
</evidence>
<evidence type="ECO:0000305" key="5"/>
<dbReference type="EMBL" id="AAFW02000020">
    <property type="protein sequence ID" value="EDN64397.1"/>
    <property type="molecule type" value="Genomic_DNA"/>
</dbReference>
<dbReference type="SMR" id="A6ZM67"/>
<dbReference type="HOGENOM" id="CLU_036634_0_0_1"/>
<dbReference type="Proteomes" id="UP000007060">
    <property type="component" value="Unassembled WGS sequence"/>
</dbReference>
<dbReference type="GO" id="GO:0005669">
    <property type="term" value="C:transcription factor TFIID complex"/>
    <property type="evidence" value="ECO:0007669"/>
    <property type="project" value="InterPro"/>
</dbReference>
<dbReference type="GO" id="GO:0003677">
    <property type="term" value="F:DNA binding"/>
    <property type="evidence" value="ECO:0007669"/>
    <property type="project" value="TreeGrafter"/>
</dbReference>
<dbReference type="GO" id="GO:0016251">
    <property type="term" value="F:RNA polymerase II general transcription initiation factor activity"/>
    <property type="evidence" value="ECO:0007669"/>
    <property type="project" value="TreeGrafter"/>
</dbReference>
<dbReference type="GO" id="GO:0006367">
    <property type="term" value="P:transcription initiation at RNA polymerase II promoter"/>
    <property type="evidence" value="ECO:0007669"/>
    <property type="project" value="TreeGrafter"/>
</dbReference>
<dbReference type="CDD" id="cd08045">
    <property type="entry name" value="HFD_TAF4"/>
    <property type="match status" value="1"/>
</dbReference>
<dbReference type="InterPro" id="IPR045144">
    <property type="entry name" value="TAF4"/>
</dbReference>
<dbReference type="InterPro" id="IPR007900">
    <property type="entry name" value="TAF4_C"/>
</dbReference>
<dbReference type="PANTHER" id="PTHR15138">
    <property type="entry name" value="TRANSCRIPTION INITIATION FACTOR TFIID SUBUNIT 4"/>
    <property type="match status" value="1"/>
</dbReference>
<dbReference type="PANTHER" id="PTHR15138:SF14">
    <property type="entry name" value="TRANSCRIPTION INITIATION FACTOR TFIID SUBUNIT 4"/>
    <property type="match status" value="1"/>
</dbReference>
<dbReference type="Pfam" id="PF05236">
    <property type="entry name" value="TAF4"/>
    <property type="match status" value="1"/>
</dbReference>
<keyword id="KW-0175">Coiled coil</keyword>
<keyword id="KW-0539">Nucleus</keyword>
<keyword id="KW-0597">Phosphoprotein</keyword>
<keyword id="KW-0804">Transcription</keyword>
<keyword id="KW-0805">Transcription regulation</keyword>
<reference key="1">
    <citation type="journal article" date="2007" name="Proc. Natl. Acad. Sci. U.S.A.">
        <title>Genome sequencing and comparative analysis of Saccharomyces cerevisiae strain YJM789.</title>
        <authorList>
            <person name="Wei W."/>
            <person name="McCusker J.H."/>
            <person name="Hyman R.W."/>
            <person name="Jones T."/>
            <person name="Ning Y."/>
            <person name="Cao Z."/>
            <person name="Gu Z."/>
            <person name="Bruno D."/>
            <person name="Miranda M."/>
            <person name="Nguyen M."/>
            <person name="Wilhelmy J."/>
            <person name="Komp C."/>
            <person name="Tamse R."/>
            <person name="Wang X."/>
            <person name="Jia P."/>
            <person name="Luedi P."/>
            <person name="Oefner P.J."/>
            <person name="David L."/>
            <person name="Dietrich F.S."/>
            <person name="Li Y."/>
            <person name="Davis R.W."/>
            <person name="Steinmetz L.M."/>
        </authorList>
    </citation>
    <scope>NUCLEOTIDE SEQUENCE [LARGE SCALE GENOMIC DNA]</scope>
    <source>
        <strain>YJM789</strain>
    </source>
</reference>
<sequence length="388" mass="42306">MANSPKKPSDGTGVSASDTPKYQHTVPETKPAFNLSPGKASELSHSLPSPSQIKSTAHVSSTHNDAAGNTDDSVLPKNVSPTTNLRVESNGDTNNMFSSPAGLALPKKDDKKKNKGTSKADSKDGKASNSSGQNAQQQSDPNKMQDVLFSAGIDVREEEALLNSSINASKSQVQTNNVKIPNHLPFLHPEQVSNYMRKVGKEQNFNLTPTKNPEILDMMSSACENYMRDILTNAIVISRHRRKAVKINSGRRSEVSAALRAIALIQKKEEERRVKKRIALGLEKEDYENKIDSEETLHRASNVTAGLRAGSKKQYGWLTSSVNKPTSLGAKSSGKVASDITARGESGLKFREAREEPGIVMRDLLFALENRRNGVQTIISKGYAKIRD</sequence>